<name>PHS_PROMT</name>
<accession>Q46GT1</accession>
<proteinExistence type="inferred from homology"/>
<dbReference type="EC" id="4.2.1.96" evidence="1"/>
<dbReference type="EMBL" id="CP000095">
    <property type="protein sequence ID" value="AAZ59312.1"/>
    <property type="status" value="ALT_INIT"/>
    <property type="molecule type" value="Genomic_DNA"/>
</dbReference>
<dbReference type="RefSeq" id="WP_011294456.1">
    <property type="nucleotide sequence ID" value="NC_007335.2"/>
</dbReference>
<dbReference type="SMR" id="Q46GT1"/>
<dbReference type="STRING" id="59920.PMN2A_1824"/>
<dbReference type="KEGG" id="pmn:PMN2A_1824"/>
<dbReference type="HOGENOM" id="CLU_081974_3_2_3"/>
<dbReference type="OrthoDB" id="9794987at2"/>
<dbReference type="PhylomeDB" id="Q46GT1"/>
<dbReference type="Proteomes" id="UP000002535">
    <property type="component" value="Chromosome"/>
</dbReference>
<dbReference type="GO" id="GO:0008124">
    <property type="term" value="F:4-alpha-hydroxytetrahydrobiopterin dehydratase activity"/>
    <property type="evidence" value="ECO:0007669"/>
    <property type="project" value="UniProtKB-UniRule"/>
</dbReference>
<dbReference type="GO" id="GO:0006729">
    <property type="term" value="P:tetrahydrobiopterin biosynthetic process"/>
    <property type="evidence" value="ECO:0007669"/>
    <property type="project" value="InterPro"/>
</dbReference>
<dbReference type="CDD" id="cd00914">
    <property type="entry name" value="PCD_DCoH_subfamily_b"/>
    <property type="match status" value="1"/>
</dbReference>
<dbReference type="Gene3D" id="3.30.1360.20">
    <property type="entry name" value="Transcriptional coactivator/pterin dehydratase"/>
    <property type="match status" value="1"/>
</dbReference>
<dbReference type="HAMAP" id="MF_00434">
    <property type="entry name" value="Pterin_4_alpha"/>
    <property type="match status" value="1"/>
</dbReference>
<dbReference type="InterPro" id="IPR036428">
    <property type="entry name" value="PCD_sf"/>
</dbReference>
<dbReference type="InterPro" id="IPR001533">
    <property type="entry name" value="Pterin_deHydtase"/>
</dbReference>
<dbReference type="NCBIfam" id="NF002017">
    <property type="entry name" value="PRK00823.1-2"/>
    <property type="match status" value="1"/>
</dbReference>
<dbReference type="NCBIfam" id="NF002018">
    <property type="entry name" value="PRK00823.1-3"/>
    <property type="match status" value="1"/>
</dbReference>
<dbReference type="PANTHER" id="PTHR12599">
    <property type="entry name" value="PTERIN-4-ALPHA-CARBINOLAMINE DEHYDRATASE"/>
    <property type="match status" value="1"/>
</dbReference>
<dbReference type="PANTHER" id="PTHR12599:SF0">
    <property type="entry name" value="PTERIN-4-ALPHA-CARBINOLAMINE DEHYDRATASE"/>
    <property type="match status" value="1"/>
</dbReference>
<dbReference type="Pfam" id="PF01329">
    <property type="entry name" value="Pterin_4a"/>
    <property type="match status" value="1"/>
</dbReference>
<dbReference type="SUPFAM" id="SSF55248">
    <property type="entry name" value="PCD-like"/>
    <property type="match status" value="1"/>
</dbReference>
<reference key="1">
    <citation type="journal article" date="2007" name="PLoS Genet.">
        <title>Patterns and implications of gene gain and loss in the evolution of Prochlorococcus.</title>
        <authorList>
            <person name="Kettler G.C."/>
            <person name="Martiny A.C."/>
            <person name="Huang K."/>
            <person name="Zucker J."/>
            <person name="Coleman M.L."/>
            <person name="Rodrigue S."/>
            <person name="Chen F."/>
            <person name="Lapidus A."/>
            <person name="Ferriera S."/>
            <person name="Johnson J."/>
            <person name="Steglich C."/>
            <person name="Church G.M."/>
            <person name="Richardson P."/>
            <person name="Chisholm S.W."/>
        </authorList>
    </citation>
    <scope>NUCLEOTIDE SEQUENCE [LARGE SCALE GENOMIC DNA]</scope>
    <source>
        <strain>NATL2A</strain>
    </source>
</reference>
<gene>
    <name type="ordered locus">PMN2A_1824</name>
</gene>
<sequence>MVSLIEKNQLDSFIEKNPSWIIDNKTIKKEFKFENFIEAFGFMSKVALLSEKIDHHPDWQNIYNKVKINLTTHDKGGITTNDIKLAEAIDKLINS</sequence>
<keyword id="KW-0456">Lyase</keyword>
<keyword id="KW-1185">Reference proteome</keyword>
<protein>
    <recommendedName>
        <fullName evidence="1">Putative pterin-4-alpha-carbinolamine dehydratase</fullName>
        <shortName evidence="1">PHS</shortName>
        <ecNumber evidence="1">4.2.1.96</ecNumber>
    </recommendedName>
    <alternativeName>
        <fullName evidence="1">4-alpha-hydroxy-tetrahydropterin dehydratase</fullName>
    </alternativeName>
    <alternativeName>
        <fullName evidence="1">Pterin carbinolamine dehydratase</fullName>
        <shortName evidence="1">PCD</shortName>
    </alternativeName>
</protein>
<evidence type="ECO:0000255" key="1">
    <source>
        <dbReference type="HAMAP-Rule" id="MF_00434"/>
    </source>
</evidence>
<evidence type="ECO:0000305" key="2"/>
<organism>
    <name type="scientific">Prochlorococcus marinus (strain NATL2A)</name>
    <dbReference type="NCBI Taxonomy" id="59920"/>
    <lineage>
        <taxon>Bacteria</taxon>
        <taxon>Bacillati</taxon>
        <taxon>Cyanobacteriota</taxon>
        <taxon>Cyanophyceae</taxon>
        <taxon>Synechococcales</taxon>
        <taxon>Prochlorococcaceae</taxon>
        <taxon>Prochlorococcus</taxon>
    </lineage>
</organism>
<comment type="catalytic activity">
    <reaction evidence="1">
        <text>(4aS,6R)-4a-hydroxy-L-erythro-5,6,7,8-tetrahydrobiopterin = (6R)-L-erythro-6,7-dihydrobiopterin + H2O</text>
        <dbReference type="Rhea" id="RHEA:11920"/>
        <dbReference type="ChEBI" id="CHEBI:15377"/>
        <dbReference type="ChEBI" id="CHEBI:15642"/>
        <dbReference type="ChEBI" id="CHEBI:43120"/>
        <dbReference type="EC" id="4.2.1.96"/>
    </reaction>
</comment>
<comment type="similarity">
    <text evidence="1">Belongs to the pterin-4-alpha-carbinolamine dehydratase family.</text>
</comment>
<comment type="sequence caution" evidence="2">
    <conflict type="erroneous initiation">
        <sequence resource="EMBL-CDS" id="AAZ59312"/>
    </conflict>
</comment>
<feature type="chain" id="PRO_0000231462" description="Putative pterin-4-alpha-carbinolamine dehydratase">
    <location>
        <begin position="1"/>
        <end position="95"/>
    </location>
</feature>